<feature type="chain" id="PRO_0000229814" description="Phosphoribosyl-AMP cyclohydrolase">
    <location>
        <begin position="1"/>
        <end position="138"/>
    </location>
</feature>
<feature type="binding site" evidence="1">
    <location>
        <position position="84"/>
    </location>
    <ligand>
        <name>Mg(2+)</name>
        <dbReference type="ChEBI" id="CHEBI:18420"/>
    </ligand>
</feature>
<feature type="binding site" evidence="1">
    <location>
        <position position="85"/>
    </location>
    <ligand>
        <name>Zn(2+)</name>
        <dbReference type="ChEBI" id="CHEBI:29105"/>
        <note>ligand shared between dimeric partners</note>
    </ligand>
</feature>
<feature type="binding site" evidence="1">
    <location>
        <position position="86"/>
    </location>
    <ligand>
        <name>Mg(2+)</name>
        <dbReference type="ChEBI" id="CHEBI:18420"/>
    </ligand>
</feature>
<feature type="binding site" evidence="1">
    <location>
        <position position="88"/>
    </location>
    <ligand>
        <name>Mg(2+)</name>
        <dbReference type="ChEBI" id="CHEBI:18420"/>
    </ligand>
</feature>
<feature type="binding site" evidence="1">
    <location>
        <position position="102"/>
    </location>
    <ligand>
        <name>Zn(2+)</name>
        <dbReference type="ChEBI" id="CHEBI:29105"/>
        <note>ligand shared between dimeric partners</note>
    </ligand>
</feature>
<feature type="binding site" evidence="1">
    <location>
        <position position="109"/>
    </location>
    <ligand>
        <name>Zn(2+)</name>
        <dbReference type="ChEBI" id="CHEBI:29105"/>
        <note>ligand shared between dimeric partners</note>
    </ligand>
</feature>
<keyword id="KW-0028">Amino-acid biosynthesis</keyword>
<keyword id="KW-0963">Cytoplasm</keyword>
<keyword id="KW-0368">Histidine biosynthesis</keyword>
<keyword id="KW-0378">Hydrolase</keyword>
<keyword id="KW-0460">Magnesium</keyword>
<keyword id="KW-0479">Metal-binding</keyword>
<keyword id="KW-1185">Reference proteome</keyword>
<keyword id="KW-0862">Zinc</keyword>
<sequence>MMNAEAKPGDWLGKVRWDANGLVPVIAQDAATNDVLMFAWMNRDALAKTIELKRAVYYSRSRQRLWFKGEESGHVQHVHEVRLDCDEDVVLLKVEQVEGIACHTGRRSCFFQKFEGTVDDGEWVAVDPVLKDPEHIYK</sequence>
<dbReference type="EC" id="3.5.4.19" evidence="1"/>
<dbReference type="EMBL" id="BX571965">
    <property type="protein sequence ID" value="CAH37142.1"/>
    <property type="molecule type" value="Genomic_DNA"/>
</dbReference>
<dbReference type="RefSeq" id="YP_109725.1">
    <property type="nucleotide sequence ID" value="NC_006350.1"/>
</dbReference>
<dbReference type="SMR" id="Q63Q93"/>
<dbReference type="STRING" id="272560.BPSL3132"/>
<dbReference type="KEGG" id="bps:BPSL3132"/>
<dbReference type="PATRIC" id="fig|272560.6.peg.3581"/>
<dbReference type="eggNOG" id="COG0139">
    <property type="taxonomic scope" value="Bacteria"/>
</dbReference>
<dbReference type="UniPathway" id="UPA00031">
    <property type="reaction ID" value="UER00008"/>
</dbReference>
<dbReference type="Proteomes" id="UP000000605">
    <property type="component" value="Chromosome 1"/>
</dbReference>
<dbReference type="GO" id="GO:0005737">
    <property type="term" value="C:cytoplasm"/>
    <property type="evidence" value="ECO:0007669"/>
    <property type="project" value="UniProtKB-SubCell"/>
</dbReference>
<dbReference type="GO" id="GO:0000287">
    <property type="term" value="F:magnesium ion binding"/>
    <property type="evidence" value="ECO:0007669"/>
    <property type="project" value="UniProtKB-UniRule"/>
</dbReference>
<dbReference type="GO" id="GO:0004635">
    <property type="term" value="F:phosphoribosyl-AMP cyclohydrolase activity"/>
    <property type="evidence" value="ECO:0007669"/>
    <property type="project" value="UniProtKB-UniRule"/>
</dbReference>
<dbReference type="GO" id="GO:0008270">
    <property type="term" value="F:zinc ion binding"/>
    <property type="evidence" value="ECO:0007669"/>
    <property type="project" value="UniProtKB-UniRule"/>
</dbReference>
<dbReference type="GO" id="GO:0000105">
    <property type="term" value="P:L-histidine biosynthetic process"/>
    <property type="evidence" value="ECO:0007669"/>
    <property type="project" value="UniProtKB-UniRule"/>
</dbReference>
<dbReference type="FunFam" id="3.10.20.810:FF:000001">
    <property type="entry name" value="Histidine biosynthesis bifunctional protein HisIE"/>
    <property type="match status" value="1"/>
</dbReference>
<dbReference type="Gene3D" id="3.10.20.810">
    <property type="entry name" value="Phosphoribosyl-AMP cyclohydrolase"/>
    <property type="match status" value="1"/>
</dbReference>
<dbReference type="HAMAP" id="MF_01021">
    <property type="entry name" value="HisI"/>
    <property type="match status" value="1"/>
</dbReference>
<dbReference type="InterPro" id="IPR026660">
    <property type="entry name" value="PRA-CH"/>
</dbReference>
<dbReference type="InterPro" id="IPR002496">
    <property type="entry name" value="PRib_AMP_CycHydrolase_dom"/>
</dbReference>
<dbReference type="InterPro" id="IPR038019">
    <property type="entry name" value="PRib_AMP_CycHydrolase_sf"/>
</dbReference>
<dbReference type="NCBIfam" id="NF000768">
    <property type="entry name" value="PRK00051.1"/>
    <property type="match status" value="1"/>
</dbReference>
<dbReference type="PANTHER" id="PTHR42945">
    <property type="entry name" value="HISTIDINE BIOSYNTHESIS BIFUNCTIONAL PROTEIN"/>
    <property type="match status" value="1"/>
</dbReference>
<dbReference type="PANTHER" id="PTHR42945:SF1">
    <property type="entry name" value="HISTIDINE BIOSYNTHESIS BIFUNCTIONAL PROTEIN HIS7"/>
    <property type="match status" value="1"/>
</dbReference>
<dbReference type="Pfam" id="PF01502">
    <property type="entry name" value="PRA-CH"/>
    <property type="match status" value="1"/>
</dbReference>
<dbReference type="SUPFAM" id="SSF141734">
    <property type="entry name" value="HisI-like"/>
    <property type="match status" value="1"/>
</dbReference>
<reference key="1">
    <citation type="journal article" date="2004" name="Proc. Natl. Acad. Sci. U.S.A.">
        <title>Genomic plasticity of the causative agent of melioidosis, Burkholderia pseudomallei.</title>
        <authorList>
            <person name="Holden M.T.G."/>
            <person name="Titball R.W."/>
            <person name="Peacock S.J."/>
            <person name="Cerdeno-Tarraga A.-M."/>
            <person name="Atkins T."/>
            <person name="Crossman L.C."/>
            <person name="Pitt T."/>
            <person name="Churcher C."/>
            <person name="Mungall K.L."/>
            <person name="Bentley S.D."/>
            <person name="Sebaihia M."/>
            <person name="Thomson N.R."/>
            <person name="Bason N."/>
            <person name="Beacham I.R."/>
            <person name="Brooks K."/>
            <person name="Brown K.A."/>
            <person name="Brown N.F."/>
            <person name="Challis G.L."/>
            <person name="Cherevach I."/>
            <person name="Chillingworth T."/>
            <person name="Cronin A."/>
            <person name="Crossett B."/>
            <person name="Davis P."/>
            <person name="DeShazer D."/>
            <person name="Feltwell T."/>
            <person name="Fraser A."/>
            <person name="Hance Z."/>
            <person name="Hauser H."/>
            <person name="Holroyd S."/>
            <person name="Jagels K."/>
            <person name="Keith K.E."/>
            <person name="Maddison M."/>
            <person name="Moule S."/>
            <person name="Price C."/>
            <person name="Quail M.A."/>
            <person name="Rabbinowitsch E."/>
            <person name="Rutherford K."/>
            <person name="Sanders M."/>
            <person name="Simmonds M."/>
            <person name="Songsivilai S."/>
            <person name="Stevens K."/>
            <person name="Tumapa S."/>
            <person name="Vesaratchavest M."/>
            <person name="Whitehead S."/>
            <person name="Yeats C."/>
            <person name="Barrell B.G."/>
            <person name="Oyston P.C.F."/>
            <person name="Parkhill J."/>
        </authorList>
    </citation>
    <scope>NUCLEOTIDE SEQUENCE [LARGE SCALE GENOMIC DNA]</scope>
    <source>
        <strain>K96243</strain>
    </source>
</reference>
<accession>Q63Q93</accession>
<name>HIS3_BURPS</name>
<organism>
    <name type="scientific">Burkholderia pseudomallei (strain K96243)</name>
    <dbReference type="NCBI Taxonomy" id="272560"/>
    <lineage>
        <taxon>Bacteria</taxon>
        <taxon>Pseudomonadati</taxon>
        <taxon>Pseudomonadota</taxon>
        <taxon>Betaproteobacteria</taxon>
        <taxon>Burkholderiales</taxon>
        <taxon>Burkholderiaceae</taxon>
        <taxon>Burkholderia</taxon>
        <taxon>pseudomallei group</taxon>
    </lineage>
</organism>
<gene>
    <name evidence="1" type="primary">hisI</name>
    <name type="ordered locus">BPSL3132</name>
</gene>
<comment type="function">
    <text evidence="1">Catalyzes the hydrolysis of the adenine ring of phosphoribosyl-AMP.</text>
</comment>
<comment type="catalytic activity">
    <reaction evidence="1">
        <text>1-(5-phospho-beta-D-ribosyl)-5'-AMP + H2O = 1-(5-phospho-beta-D-ribosyl)-5-[(5-phospho-beta-D-ribosylamino)methylideneamino]imidazole-4-carboxamide</text>
        <dbReference type="Rhea" id="RHEA:20049"/>
        <dbReference type="ChEBI" id="CHEBI:15377"/>
        <dbReference type="ChEBI" id="CHEBI:58435"/>
        <dbReference type="ChEBI" id="CHEBI:59457"/>
        <dbReference type="EC" id="3.5.4.19"/>
    </reaction>
</comment>
<comment type="cofactor">
    <cofactor evidence="1">
        <name>Mg(2+)</name>
        <dbReference type="ChEBI" id="CHEBI:18420"/>
    </cofactor>
    <text evidence="1">Binds 1 Mg(2+) ion per subunit.</text>
</comment>
<comment type="cofactor">
    <cofactor evidence="1">
        <name>Zn(2+)</name>
        <dbReference type="ChEBI" id="CHEBI:29105"/>
    </cofactor>
    <text evidence="1">Binds 1 zinc ion per subunit.</text>
</comment>
<comment type="pathway">
    <text evidence="1">Amino-acid biosynthesis; L-histidine biosynthesis; L-histidine from 5-phospho-alpha-D-ribose 1-diphosphate: step 3/9.</text>
</comment>
<comment type="subunit">
    <text evidence="1">Homodimer.</text>
</comment>
<comment type="subcellular location">
    <subcellularLocation>
        <location evidence="1">Cytoplasm</location>
    </subcellularLocation>
</comment>
<comment type="similarity">
    <text evidence="1">Belongs to the PRA-CH family.</text>
</comment>
<proteinExistence type="inferred from homology"/>
<protein>
    <recommendedName>
        <fullName evidence="1">Phosphoribosyl-AMP cyclohydrolase</fullName>
        <shortName evidence="1">PRA-CH</shortName>
        <ecNumber evidence="1">3.5.4.19</ecNumber>
    </recommendedName>
</protein>
<evidence type="ECO:0000255" key="1">
    <source>
        <dbReference type="HAMAP-Rule" id="MF_01021"/>
    </source>
</evidence>